<dbReference type="EMBL" id="AL132978">
    <property type="protein sequence ID" value="CAB62105.1"/>
    <property type="status" value="ALT_SEQ"/>
    <property type="molecule type" value="Genomic_DNA"/>
</dbReference>
<dbReference type="EMBL" id="CP002686">
    <property type="protein sequence ID" value="AEE78612.2"/>
    <property type="molecule type" value="Genomic_DNA"/>
</dbReference>
<dbReference type="EMBL" id="CP002686">
    <property type="protein sequence ID" value="ANM65324.1"/>
    <property type="molecule type" value="Genomic_DNA"/>
</dbReference>
<dbReference type="PIR" id="T45850">
    <property type="entry name" value="T45850"/>
</dbReference>
<dbReference type="RefSeq" id="NP_001319719.1">
    <property type="nucleotide sequence ID" value="NM_001339447.1"/>
</dbReference>
<dbReference type="RefSeq" id="NP_001327302.1">
    <property type="nucleotide sequence ID" value="NM_001339448.1"/>
</dbReference>
<dbReference type="STRING" id="3702.Q9SN21"/>
<dbReference type="PaxDb" id="3702-AT3G49970.1"/>
<dbReference type="EnsemblPlants" id="AT3G49970.1">
    <property type="protein sequence ID" value="AT3G49970.1"/>
    <property type="gene ID" value="AT3G49970"/>
</dbReference>
<dbReference type="EnsemblPlants" id="AT3G49970.2">
    <property type="protein sequence ID" value="AT3G49970.2"/>
    <property type="gene ID" value="AT3G49970"/>
</dbReference>
<dbReference type="GeneID" id="824159"/>
<dbReference type="Gramene" id="AT3G49970.1">
    <property type="protein sequence ID" value="AT3G49970.1"/>
    <property type="gene ID" value="AT3G49970"/>
</dbReference>
<dbReference type="Gramene" id="AT3G49970.2">
    <property type="protein sequence ID" value="AT3G49970.2"/>
    <property type="gene ID" value="AT3G49970"/>
</dbReference>
<dbReference type="KEGG" id="ath:AT3G49970"/>
<dbReference type="Araport" id="AT3G49970"/>
<dbReference type="TAIR" id="AT3G49970"/>
<dbReference type="eggNOG" id="ENOG502QUFV">
    <property type="taxonomic scope" value="Eukaryota"/>
</dbReference>
<dbReference type="HOGENOM" id="CLU_005994_6_0_1"/>
<dbReference type="InParanoid" id="Q9SN21"/>
<dbReference type="OMA" id="EDIVDWW"/>
<dbReference type="PhylomeDB" id="Q9SN21"/>
<dbReference type="UniPathway" id="UPA00143"/>
<dbReference type="PRO" id="PR:Q9SN21"/>
<dbReference type="Proteomes" id="UP000006548">
    <property type="component" value="Chromosome 3"/>
</dbReference>
<dbReference type="ExpressionAtlas" id="Q9SN21">
    <property type="expression patterns" value="baseline and differential"/>
</dbReference>
<dbReference type="GO" id="GO:0016567">
    <property type="term" value="P:protein ubiquitination"/>
    <property type="evidence" value="ECO:0007669"/>
    <property type="project" value="UniProtKB-UniPathway"/>
</dbReference>
<dbReference type="Gene3D" id="3.30.710.10">
    <property type="entry name" value="Potassium Channel Kv1.1, Chain A"/>
    <property type="match status" value="1"/>
</dbReference>
<dbReference type="InterPro" id="IPR000210">
    <property type="entry name" value="BTB/POZ_dom"/>
</dbReference>
<dbReference type="InterPro" id="IPR043454">
    <property type="entry name" value="NPH3/RPT2-like"/>
</dbReference>
<dbReference type="InterPro" id="IPR027356">
    <property type="entry name" value="NPH3_dom"/>
</dbReference>
<dbReference type="InterPro" id="IPR011333">
    <property type="entry name" value="SKP1/BTB/POZ_sf"/>
</dbReference>
<dbReference type="PANTHER" id="PTHR32370">
    <property type="entry name" value="OS12G0117600 PROTEIN"/>
    <property type="match status" value="1"/>
</dbReference>
<dbReference type="Pfam" id="PF00651">
    <property type="entry name" value="BTB"/>
    <property type="match status" value="1"/>
</dbReference>
<dbReference type="Pfam" id="PF03000">
    <property type="entry name" value="NPH3"/>
    <property type="match status" value="1"/>
</dbReference>
<dbReference type="SUPFAM" id="SSF54695">
    <property type="entry name" value="POZ domain"/>
    <property type="match status" value="1"/>
</dbReference>
<dbReference type="PROSITE" id="PS51649">
    <property type="entry name" value="NPH3"/>
    <property type="match status" value="1"/>
</dbReference>
<proteinExistence type="inferred from homology"/>
<gene>
    <name type="ordered locus">At3g49970</name>
    <name type="ORF">F3A4.50</name>
</gene>
<name>Y3997_ARATH</name>
<protein>
    <recommendedName>
        <fullName>Putative BTB/POZ domain-containing protein At3g49970</fullName>
    </recommendedName>
</protein>
<comment type="function">
    <text evidence="1">May act as a substrate-specific adapter of an E3 ubiquitin-protein ligase complex (CUL3-RBX1-BTB) which mediates the ubiquitination and subsequent proteasomal degradation of target proteins.</text>
</comment>
<comment type="pathway">
    <text>Protein modification; protein ubiquitination.</text>
</comment>
<comment type="domain">
    <text evidence="6">The BTB/POZ domain mediates the interaction with some component of ubiquitin ligase complexes.</text>
</comment>
<comment type="similarity">
    <text evidence="4">Belongs to the NPH3 family.</text>
</comment>
<comment type="sequence caution" evidence="7">
    <conflict type="erroneous gene model prediction">
        <sequence resource="EMBL-CDS" id="CAB62105"/>
    </conflict>
</comment>
<sequence length="515" mass="58517">MLEKLSFLLHKFPLVSKCGFIKKLASESSNDSNIIRIPDFPGGAEGFELVIKFCYDISFEINTENIAMLLCAAEYLEMTEEHSVENLVETIEVYLNEVILKSLSKSVKVLQKSQDLLPIAERVRLVDRCIDSIAYAICQESQSNEDIVDWWADDLAVLKIDMFRRVLVAMIARGFKRYSLGPVLKLYAEKALRGLDIFGKEAKKMEAEQEHEKRLILETIVSLLPRERNSVSVSFLSILLRAAIYLETTVACRLDLEKRMGLQLRQAVIDDLLIPYYSFNGDNTMLDVDTVQRILMNYLEFEVEGNSADFASDIGELMETYLAEIASDRNINFAKFIGFAECIPKQSRMYRAIDIFLKTHPNISEVEKKKVCSLMDCKKLSRDVYAHAAQNDRFQENLSNSDSPAPATAEKTLSPPELSSYKNELSKLNRENQYLKLELLKVKMKFKELEKEKAFEVMSGSDCSSSVSTASVAKPRLPRKSFINSVSQKLGKLINPFGLKQGQTKQPKSRRHSIS</sequence>
<feature type="chain" id="PRO_0000409580" description="Putative BTB/POZ domain-containing protein At3g49970">
    <location>
        <begin position="1"/>
        <end position="515"/>
    </location>
</feature>
<feature type="domain" description="BTB">
    <location>
        <begin position="1"/>
        <end position="63"/>
    </location>
</feature>
<feature type="domain" description="NPH3" evidence="4">
    <location>
        <begin position="149"/>
        <end position="409"/>
    </location>
</feature>
<feature type="region of interest" description="Disordered" evidence="5">
    <location>
        <begin position="395"/>
        <end position="417"/>
    </location>
</feature>
<feature type="region of interest" description="Disordered" evidence="5">
    <location>
        <begin position="494"/>
        <end position="515"/>
    </location>
</feature>
<feature type="coiled-coil region" evidence="3">
    <location>
        <begin position="418"/>
        <end position="452"/>
    </location>
</feature>
<feature type="modified residue" description="Phosphotyrosine" evidence="2">
    <location>
        <position position="350"/>
    </location>
</feature>
<reference key="1">
    <citation type="journal article" date="2000" name="Nature">
        <title>Sequence and analysis of chromosome 3 of the plant Arabidopsis thaliana.</title>
        <authorList>
            <person name="Salanoubat M."/>
            <person name="Lemcke K."/>
            <person name="Rieger M."/>
            <person name="Ansorge W."/>
            <person name="Unseld M."/>
            <person name="Fartmann B."/>
            <person name="Valle G."/>
            <person name="Bloecker H."/>
            <person name="Perez-Alonso M."/>
            <person name="Obermaier B."/>
            <person name="Delseny M."/>
            <person name="Boutry M."/>
            <person name="Grivell L.A."/>
            <person name="Mache R."/>
            <person name="Puigdomenech P."/>
            <person name="De Simone V."/>
            <person name="Choisne N."/>
            <person name="Artiguenave F."/>
            <person name="Robert C."/>
            <person name="Brottier P."/>
            <person name="Wincker P."/>
            <person name="Cattolico L."/>
            <person name="Weissenbach J."/>
            <person name="Saurin W."/>
            <person name="Quetier F."/>
            <person name="Schaefer M."/>
            <person name="Mueller-Auer S."/>
            <person name="Gabel C."/>
            <person name="Fuchs M."/>
            <person name="Benes V."/>
            <person name="Wurmbach E."/>
            <person name="Drzonek H."/>
            <person name="Erfle H."/>
            <person name="Jordan N."/>
            <person name="Bangert S."/>
            <person name="Wiedelmann R."/>
            <person name="Kranz H."/>
            <person name="Voss H."/>
            <person name="Holland R."/>
            <person name="Brandt P."/>
            <person name="Nyakatura G."/>
            <person name="Vezzi A."/>
            <person name="D'Angelo M."/>
            <person name="Pallavicini A."/>
            <person name="Toppo S."/>
            <person name="Simionati B."/>
            <person name="Conrad A."/>
            <person name="Hornischer K."/>
            <person name="Kauer G."/>
            <person name="Loehnert T.-H."/>
            <person name="Nordsiek G."/>
            <person name="Reichelt J."/>
            <person name="Scharfe M."/>
            <person name="Schoen O."/>
            <person name="Bargues M."/>
            <person name="Terol J."/>
            <person name="Climent J."/>
            <person name="Navarro P."/>
            <person name="Collado C."/>
            <person name="Perez-Perez A."/>
            <person name="Ottenwaelder B."/>
            <person name="Duchemin D."/>
            <person name="Cooke R."/>
            <person name="Laudie M."/>
            <person name="Berger-Llauro C."/>
            <person name="Purnelle B."/>
            <person name="Masuy D."/>
            <person name="de Haan M."/>
            <person name="Maarse A.C."/>
            <person name="Alcaraz J.-P."/>
            <person name="Cottet A."/>
            <person name="Casacuberta E."/>
            <person name="Monfort A."/>
            <person name="Argiriou A."/>
            <person name="Flores M."/>
            <person name="Liguori R."/>
            <person name="Vitale D."/>
            <person name="Mannhaupt G."/>
            <person name="Haase D."/>
            <person name="Schoof H."/>
            <person name="Rudd S."/>
            <person name="Zaccaria P."/>
            <person name="Mewes H.-W."/>
            <person name="Mayer K.F.X."/>
            <person name="Kaul S."/>
            <person name="Town C.D."/>
            <person name="Koo H.L."/>
            <person name="Tallon L.J."/>
            <person name="Jenkins J."/>
            <person name="Rooney T."/>
            <person name="Rizzo M."/>
            <person name="Walts A."/>
            <person name="Utterback T."/>
            <person name="Fujii C.Y."/>
            <person name="Shea T.P."/>
            <person name="Creasy T.H."/>
            <person name="Haas B."/>
            <person name="Maiti R."/>
            <person name="Wu D."/>
            <person name="Peterson J."/>
            <person name="Van Aken S."/>
            <person name="Pai G."/>
            <person name="Militscher J."/>
            <person name="Sellers P."/>
            <person name="Gill J.E."/>
            <person name="Feldblyum T.V."/>
            <person name="Preuss D."/>
            <person name="Lin X."/>
            <person name="Nierman W.C."/>
            <person name="Salzberg S.L."/>
            <person name="White O."/>
            <person name="Venter J.C."/>
            <person name="Fraser C.M."/>
            <person name="Kaneko T."/>
            <person name="Nakamura Y."/>
            <person name="Sato S."/>
            <person name="Kato T."/>
            <person name="Asamizu E."/>
            <person name="Sasamoto S."/>
            <person name="Kimura T."/>
            <person name="Idesawa K."/>
            <person name="Kawashima K."/>
            <person name="Kishida Y."/>
            <person name="Kiyokawa C."/>
            <person name="Kohara M."/>
            <person name="Matsumoto M."/>
            <person name="Matsuno A."/>
            <person name="Muraki A."/>
            <person name="Nakayama S."/>
            <person name="Nakazaki N."/>
            <person name="Shinpo S."/>
            <person name="Takeuchi C."/>
            <person name="Wada T."/>
            <person name="Watanabe A."/>
            <person name="Yamada M."/>
            <person name="Yasuda M."/>
            <person name="Tabata S."/>
        </authorList>
    </citation>
    <scope>NUCLEOTIDE SEQUENCE [LARGE SCALE GENOMIC DNA]</scope>
    <source>
        <strain>cv. Columbia</strain>
    </source>
</reference>
<reference key="2">
    <citation type="journal article" date="2017" name="Plant J.">
        <title>Araport11: a complete reannotation of the Arabidopsis thaliana reference genome.</title>
        <authorList>
            <person name="Cheng C.Y."/>
            <person name="Krishnakumar V."/>
            <person name="Chan A.P."/>
            <person name="Thibaud-Nissen F."/>
            <person name="Schobel S."/>
            <person name="Town C.D."/>
        </authorList>
    </citation>
    <scope>GENOME REANNOTATION</scope>
    <source>
        <strain>cv. Columbia</strain>
    </source>
</reference>
<reference key="3">
    <citation type="journal article" date="2005" name="J. Biol. Chem.">
        <title>Cullins 3a and 3b assemble with members of the broad complex/tramtrack/bric-a-brac (BTB) protein family to form essential ubiquitin-protein ligases (E3s) in Arabidopsis.</title>
        <authorList>
            <person name="Gingerich D.J."/>
            <person name="Gagne J.M."/>
            <person name="Salter D.W."/>
            <person name="Hellmann H."/>
            <person name="Estelle M."/>
            <person name="Ma L."/>
            <person name="Vierstra R.D."/>
        </authorList>
    </citation>
    <scope>DOMAIN BTB</scope>
</reference>
<keyword id="KW-0175">Coiled coil</keyword>
<keyword id="KW-0597">Phosphoprotein</keyword>
<keyword id="KW-1185">Reference proteome</keyword>
<keyword id="KW-0833">Ubl conjugation pathway</keyword>
<accession>Q9SN21</accession>
<accession>A0A1I9LRW6</accession>
<organism>
    <name type="scientific">Arabidopsis thaliana</name>
    <name type="common">Mouse-ear cress</name>
    <dbReference type="NCBI Taxonomy" id="3702"/>
    <lineage>
        <taxon>Eukaryota</taxon>
        <taxon>Viridiplantae</taxon>
        <taxon>Streptophyta</taxon>
        <taxon>Embryophyta</taxon>
        <taxon>Tracheophyta</taxon>
        <taxon>Spermatophyta</taxon>
        <taxon>Magnoliopsida</taxon>
        <taxon>eudicotyledons</taxon>
        <taxon>Gunneridae</taxon>
        <taxon>Pentapetalae</taxon>
        <taxon>rosids</taxon>
        <taxon>malvids</taxon>
        <taxon>Brassicales</taxon>
        <taxon>Brassicaceae</taxon>
        <taxon>Camelineae</taxon>
        <taxon>Arabidopsis</taxon>
    </lineage>
</organism>
<evidence type="ECO:0000250" key="1"/>
<evidence type="ECO:0000250" key="2">
    <source>
        <dbReference type="UniProtKB" id="Q9FMF5"/>
    </source>
</evidence>
<evidence type="ECO:0000255" key="3"/>
<evidence type="ECO:0000255" key="4">
    <source>
        <dbReference type="PROSITE-ProRule" id="PRU00982"/>
    </source>
</evidence>
<evidence type="ECO:0000256" key="5">
    <source>
        <dbReference type="SAM" id="MobiDB-lite"/>
    </source>
</evidence>
<evidence type="ECO:0000269" key="6">
    <source>
    </source>
</evidence>
<evidence type="ECO:0000305" key="7"/>